<proteinExistence type="inferred from homology"/>
<sequence>MLESIQAVQAPYYGDVSYRTPPPDLPSLLLKERIIYLGMPLFSSDDVKRQVGFDVTELIIAQLLYLEFDNPEKPIYFYINSTGTSWYTGDAIGYETEAFAICDTMRYIKPPVHTICIGQAMGTAAMILSGGTPGNRASLPHATIVLNQPRTGAQGQASDIQIRAKEVLANKRTMLEIFARNTGQDPDRLARDTDRMLYMTPAQAVEYGLIDRVLDSRKDLPAPLPSFS</sequence>
<dbReference type="EMBL" id="AJ132005">
    <property type="protein sequence ID" value="CAB81780.1"/>
    <property type="molecule type" value="Genomic_DNA"/>
</dbReference>
<dbReference type="EMBL" id="CP000100">
    <property type="protein sequence ID" value="ABB58568.1"/>
    <property type="molecule type" value="Genomic_DNA"/>
</dbReference>
<dbReference type="RefSeq" id="WP_011243882.1">
    <property type="nucleotide sequence ID" value="NZ_JACJTX010000001.1"/>
</dbReference>
<dbReference type="SMR" id="Q9L4P4"/>
<dbReference type="STRING" id="1140.Synpcc7942_2538"/>
<dbReference type="MEROPS" id="S14.001"/>
<dbReference type="PaxDb" id="1140-Synpcc7942_2538"/>
<dbReference type="KEGG" id="syf:Synpcc7942_2538"/>
<dbReference type="eggNOG" id="COG0740">
    <property type="taxonomic scope" value="Bacteria"/>
</dbReference>
<dbReference type="HOGENOM" id="CLU_058707_5_2_3"/>
<dbReference type="OrthoDB" id="571524at2"/>
<dbReference type="BioCyc" id="MetaCyc:SYNPCC7942_2538-MONOMER"/>
<dbReference type="BioCyc" id="SYNEL:SYNPCC7942_2538-MONOMER"/>
<dbReference type="Proteomes" id="UP000889800">
    <property type="component" value="Chromosome"/>
</dbReference>
<dbReference type="GO" id="GO:0005737">
    <property type="term" value="C:cytoplasm"/>
    <property type="evidence" value="ECO:0007669"/>
    <property type="project" value="UniProtKB-UniRule"/>
</dbReference>
<dbReference type="GO" id="GO:0009368">
    <property type="term" value="C:endopeptidase Clp complex"/>
    <property type="evidence" value="ECO:0007669"/>
    <property type="project" value="TreeGrafter"/>
</dbReference>
<dbReference type="GO" id="GO:0004176">
    <property type="term" value="F:ATP-dependent peptidase activity"/>
    <property type="evidence" value="ECO:0007669"/>
    <property type="project" value="InterPro"/>
</dbReference>
<dbReference type="GO" id="GO:0051117">
    <property type="term" value="F:ATPase binding"/>
    <property type="evidence" value="ECO:0007669"/>
    <property type="project" value="TreeGrafter"/>
</dbReference>
<dbReference type="GO" id="GO:0004252">
    <property type="term" value="F:serine-type endopeptidase activity"/>
    <property type="evidence" value="ECO:0007669"/>
    <property type="project" value="UniProtKB-UniRule"/>
</dbReference>
<dbReference type="GO" id="GO:0006515">
    <property type="term" value="P:protein quality control for misfolded or incompletely synthesized proteins"/>
    <property type="evidence" value="ECO:0007669"/>
    <property type="project" value="TreeGrafter"/>
</dbReference>
<dbReference type="CDD" id="cd07017">
    <property type="entry name" value="S14_ClpP_2"/>
    <property type="match status" value="1"/>
</dbReference>
<dbReference type="Gene3D" id="3.90.226.10">
    <property type="entry name" value="2-enoyl-CoA Hydratase, Chain A, domain 1"/>
    <property type="match status" value="1"/>
</dbReference>
<dbReference type="HAMAP" id="MF_00444">
    <property type="entry name" value="ClpP"/>
    <property type="match status" value="1"/>
</dbReference>
<dbReference type="InterPro" id="IPR001907">
    <property type="entry name" value="ClpP"/>
</dbReference>
<dbReference type="InterPro" id="IPR029045">
    <property type="entry name" value="ClpP/crotonase-like_dom_sf"/>
</dbReference>
<dbReference type="InterPro" id="IPR023562">
    <property type="entry name" value="ClpP/TepA"/>
</dbReference>
<dbReference type="NCBIfam" id="NF009204">
    <property type="entry name" value="PRK12552.1"/>
    <property type="match status" value="1"/>
</dbReference>
<dbReference type="PANTHER" id="PTHR10381">
    <property type="entry name" value="ATP-DEPENDENT CLP PROTEASE PROTEOLYTIC SUBUNIT"/>
    <property type="match status" value="1"/>
</dbReference>
<dbReference type="PANTHER" id="PTHR10381:SF72">
    <property type="entry name" value="ATP-DEPENDENT CLP PROTEASE PROTEOLYTIC SUBUNIT-LIKE-RELATED"/>
    <property type="match status" value="1"/>
</dbReference>
<dbReference type="Pfam" id="PF00574">
    <property type="entry name" value="CLP_protease"/>
    <property type="match status" value="1"/>
</dbReference>
<dbReference type="PRINTS" id="PR00127">
    <property type="entry name" value="CLPPROTEASEP"/>
</dbReference>
<dbReference type="SUPFAM" id="SSF52096">
    <property type="entry name" value="ClpP/crotonase"/>
    <property type="match status" value="1"/>
</dbReference>
<accession>Q9L4P4</accession>
<accession>Q31K51</accession>
<name>CLPR_SYNE7</name>
<keyword id="KW-1185">Reference proteome</keyword>
<reference key="1">
    <citation type="submission" date="2000-03" db="EMBL/GenBank/DDBJ databases">
        <title>Cloning and sequencing of additional proteolytic subunits of the ATP-dependent Clp protease (ClpR and ClpP3) from the cyanobacterium Synechococcus sp. strain PCC 7942.</title>
        <authorList>
            <person name="Schelin J.R."/>
            <person name="Clarke A.K."/>
        </authorList>
    </citation>
    <scope>NUCLEOTIDE SEQUENCE [GENOMIC DNA]</scope>
</reference>
<reference key="2">
    <citation type="submission" date="2005-08" db="EMBL/GenBank/DDBJ databases">
        <title>Complete sequence of chromosome 1 of Synechococcus elongatus PCC 7942.</title>
        <authorList>
            <consortium name="US DOE Joint Genome Institute"/>
            <person name="Copeland A."/>
            <person name="Lucas S."/>
            <person name="Lapidus A."/>
            <person name="Barry K."/>
            <person name="Detter J.C."/>
            <person name="Glavina T."/>
            <person name="Hammon N."/>
            <person name="Israni S."/>
            <person name="Pitluck S."/>
            <person name="Schmutz J."/>
            <person name="Larimer F."/>
            <person name="Land M."/>
            <person name="Kyrpides N."/>
            <person name="Lykidis A."/>
            <person name="Golden S."/>
            <person name="Richardson P."/>
        </authorList>
    </citation>
    <scope>NUCLEOTIDE SEQUENCE [LARGE SCALE GENOMIC DNA]</scope>
    <source>
        <strain>ATCC 33912 / PCC 7942 / FACHB-805</strain>
    </source>
</reference>
<comment type="function">
    <text>Has lost the two conserved residues (Ser and His) proposed to be part of the active site. Therefore it could be inactive.</text>
</comment>
<comment type="similarity">
    <text evidence="1">Belongs to the peptidase S14 family.</text>
</comment>
<feature type="chain" id="PRO_0000179689" description="Putative ATP-dependent Clp protease proteolytic subunit-like">
    <location>
        <begin position="1"/>
        <end position="228"/>
    </location>
</feature>
<organism>
    <name type="scientific">Synechococcus elongatus (strain ATCC 33912 / PCC 7942 / FACHB-805)</name>
    <name type="common">Anacystis nidulans R2</name>
    <dbReference type="NCBI Taxonomy" id="1140"/>
    <lineage>
        <taxon>Bacteria</taxon>
        <taxon>Bacillati</taxon>
        <taxon>Cyanobacteriota</taxon>
        <taxon>Cyanophyceae</taxon>
        <taxon>Synechococcales</taxon>
        <taxon>Synechococcaceae</taxon>
        <taxon>Synechococcus</taxon>
    </lineage>
</organism>
<protein>
    <recommendedName>
        <fullName>Putative ATP-dependent Clp protease proteolytic subunit-like</fullName>
    </recommendedName>
    <alternativeName>
        <fullName>Endopeptidase Clp-like</fullName>
    </alternativeName>
</protein>
<evidence type="ECO:0000305" key="1"/>
<gene>
    <name type="primary">clpR</name>
    <name type="ordered locus">Synpcc7942_2538</name>
</gene>